<evidence type="ECO:0000255" key="1">
    <source>
        <dbReference type="HAMAP-Rule" id="MF_00054"/>
    </source>
</evidence>
<name>EFG_BACHK</name>
<comment type="function">
    <text evidence="1">Catalyzes the GTP-dependent ribosomal translocation step during translation elongation. During this step, the ribosome changes from the pre-translocational (PRE) to the post-translocational (POST) state as the newly formed A-site-bound peptidyl-tRNA and P-site-bound deacylated tRNA move to the P and E sites, respectively. Catalyzes the coordinated movement of the two tRNA molecules, the mRNA and conformational changes in the ribosome.</text>
</comment>
<comment type="subcellular location">
    <subcellularLocation>
        <location evidence="1">Cytoplasm</location>
    </subcellularLocation>
</comment>
<comment type="similarity">
    <text evidence="1">Belongs to the TRAFAC class translation factor GTPase superfamily. Classic translation factor GTPase family. EF-G/EF-2 subfamily.</text>
</comment>
<dbReference type="EMBL" id="AE017355">
    <property type="protein sequence ID" value="AAT61171.1"/>
    <property type="molecule type" value="Genomic_DNA"/>
</dbReference>
<dbReference type="RefSeq" id="WP_000090364.1">
    <property type="nucleotide sequence ID" value="NC_005957.1"/>
</dbReference>
<dbReference type="RefSeq" id="YP_034459.1">
    <property type="nucleotide sequence ID" value="NC_005957.1"/>
</dbReference>
<dbReference type="SMR" id="Q6HPR1"/>
<dbReference type="GeneID" id="45020152"/>
<dbReference type="KEGG" id="btk:BT9727_0103"/>
<dbReference type="PATRIC" id="fig|281309.8.peg.104"/>
<dbReference type="HOGENOM" id="CLU_002794_4_1_9"/>
<dbReference type="Proteomes" id="UP000001301">
    <property type="component" value="Chromosome"/>
</dbReference>
<dbReference type="GO" id="GO:0005737">
    <property type="term" value="C:cytoplasm"/>
    <property type="evidence" value="ECO:0007669"/>
    <property type="project" value="UniProtKB-SubCell"/>
</dbReference>
<dbReference type="GO" id="GO:0005525">
    <property type="term" value="F:GTP binding"/>
    <property type="evidence" value="ECO:0007669"/>
    <property type="project" value="UniProtKB-UniRule"/>
</dbReference>
<dbReference type="GO" id="GO:0003924">
    <property type="term" value="F:GTPase activity"/>
    <property type="evidence" value="ECO:0007669"/>
    <property type="project" value="InterPro"/>
</dbReference>
<dbReference type="GO" id="GO:0003746">
    <property type="term" value="F:translation elongation factor activity"/>
    <property type="evidence" value="ECO:0007669"/>
    <property type="project" value="UniProtKB-UniRule"/>
</dbReference>
<dbReference type="GO" id="GO:0032790">
    <property type="term" value="P:ribosome disassembly"/>
    <property type="evidence" value="ECO:0007669"/>
    <property type="project" value="TreeGrafter"/>
</dbReference>
<dbReference type="CDD" id="cd01886">
    <property type="entry name" value="EF-G"/>
    <property type="match status" value="1"/>
</dbReference>
<dbReference type="CDD" id="cd16262">
    <property type="entry name" value="EFG_III"/>
    <property type="match status" value="1"/>
</dbReference>
<dbReference type="CDD" id="cd01434">
    <property type="entry name" value="EFG_mtEFG1_IV"/>
    <property type="match status" value="1"/>
</dbReference>
<dbReference type="CDD" id="cd03713">
    <property type="entry name" value="EFG_mtEFG_C"/>
    <property type="match status" value="1"/>
</dbReference>
<dbReference type="CDD" id="cd04088">
    <property type="entry name" value="EFG_mtEFG_II"/>
    <property type="match status" value="1"/>
</dbReference>
<dbReference type="FunFam" id="2.40.30.10:FF:000006">
    <property type="entry name" value="Elongation factor G"/>
    <property type="match status" value="1"/>
</dbReference>
<dbReference type="FunFam" id="3.30.230.10:FF:000003">
    <property type="entry name" value="Elongation factor G"/>
    <property type="match status" value="1"/>
</dbReference>
<dbReference type="FunFam" id="3.30.70.240:FF:000001">
    <property type="entry name" value="Elongation factor G"/>
    <property type="match status" value="1"/>
</dbReference>
<dbReference type="FunFam" id="3.30.70.870:FF:000001">
    <property type="entry name" value="Elongation factor G"/>
    <property type="match status" value="1"/>
</dbReference>
<dbReference type="FunFam" id="3.40.50.300:FF:000029">
    <property type="entry name" value="Elongation factor G"/>
    <property type="match status" value="1"/>
</dbReference>
<dbReference type="Gene3D" id="3.30.230.10">
    <property type="match status" value="1"/>
</dbReference>
<dbReference type="Gene3D" id="3.30.70.240">
    <property type="match status" value="1"/>
</dbReference>
<dbReference type="Gene3D" id="3.30.70.870">
    <property type="entry name" value="Elongation Factor G (Translational Gtpase), domain 3"/>
    <property type="match status" value="1"/>
</dbReference>
<dbReference type="Gene3D" id="3.40.50.300">
    <property type="entry name" value="P-loop containing nucleotide triphosphate hydrolases"/>
    <property type="match status" value="1"/>
</dbReference>
<dbReference type="Gene3D" id="2.40.30.10">
    <property type="entry name" value="Translation factors"/>
    <property type="match status" value="1"/>
</dbReference>
<dbReference type="HAMAP" id="MF_00054_B">
    <property type="entry name" value="EF_G_EF_2_B"/>
    <property type="match status" value="1"/>
</dbReference>
<dbReference type="InterPro" id="IPR041095">
    <property type="entry name" value="EFG_II"/>
</dbReference>
<dbReference type="InterPro" id="IPR009022">
    <property type="entry name" value="EFG_III"/>
</dbReference>
<dbReference type="InterPro" id="IPR035647">
    <property type="entry name" value="EFG_III/V"/>
</dbReference>
<dbReference type="InterPro" id="IPR047872">
    <property type="entry name" value="EFG_IV"/>
</dbReference>
<dbReference type="InterPro" id="IPR035649">
    <property type="entry name" value="EFG_V"/>
</dbReference>
<dbReference type="InterPro" id="IPR000640">
    <property type="entry name" value="EFG_V-like"/>
</dbReference>
<dbReference type="InterPro" id="IPR004161">
    <property type="entry name" value="EFTu-like_2"/>
</dbReference>
<dbReference type="InterPro" id="IPR031157">
    <property type="entry name" value="G_TR_CS"/>
</dbReference>
<dbReference type="InterPro" id="IPR027417">
    <property type="entry name" value="P-loop_NTPase"/>
</dbReference>
<dbReference type="InterPro" id="IPR020568">
    <property type="entry name" value="Ribosomal_Su5_D2-typ_SF"/>
</dbReference>
<dbReference type="InterPro" id="IPR014721">
    <property type="entry name" value="Ribsml_uS5_D2-typ_fold_subgr"/>
</dbReference>
<dbReference type="InterPro" id="IPR005225">
    <property type="entry name" value="Small_GTP-bd"/>
</dbReference>
<dbReference type="InterPro" id="IPR000795">
    <property type="entry name" value="T_Tr_GTP-bd_dom"/>
</dbReference>
<dbReference type="InterPro" id="IPR009000">
    <property type="entry name" value="Transl_B-barrel_sf"/>
</dbReference>
<dbReference type="InterPro" id="IPR004540">
    <property type="entry name" value="Transl_elong_EFG/EF2"/>
</dbReference>
<dbReference type="InterPro" id="IPR005517">
    <property type="entry name" value="Transl_elong_EFG/EF2_IV"/>
</dbReference>
<dbReference type="NCBIfam" id="TIGR00484">
    <property type="entry name" value="EF-G"/>
    <property type="match status" value="1"/>
</dbReference>
<dbReference type="NCBIfam" id="NF009379">
    <property type="entry name" value="PRK12740.1-3"/>
    <property type="match status" value="1"/>
</dbReference>
<dbReference type="NCBIfam" id="NF009381">
    <property type="entry name" value="PRK12740.1-5"/>
    <property type="match status" value="1"/>
</dbReference>
<dbReference type="NCBIfam" id="NF009891">
    <property type="entry name" value="PRK13351.1-1"/>
    <property type="match status" value="1"/>
</dbReference>
<dbReference type="NCBIfam" id="TIGR00231">
    <property type="entry name" value="small_GTP"/>
    <property type="match status" value="1"/>
</dbReference>
<dbReference type="PANTHER" id="PTHR43261:SF1">
    <property type="entry name" value="RIBOSOME-RELEASING FACTOR 2, MITOCHONDRIAL"/>
    <property type="match status" value="1"/>
</dbReference>
<dbReference type="PANTHER" id="PTHR43261">
    <property type="entry name" value="TRANSLATION ELONGATION FACTOR G-RELATED"/>
    <property type="match status" value="1"/>
</dbReference>
<dbReference type="Pfam" id="PF00679">
    <property type="entry name" value="EFG_C"/>
    <property type="match status" value="1"/>
</dbReference>
<dbReference type="Pfam" id="PF14492">
    <property type="entry name" value="EFG_III"/>
    <property type="match status" value="1"/>
</dbReference>
<dbReference type="Pfam" id="PF03764">
    <property type="entry name" value="EFG_IV"/>
    <property type="match status" value="1"/>
</dbReference>
<dbReference type="Pfam" id="PF00009">
    <property type="entry name" value="GTP_EFTU"/>
    <property type="match status" value="1"/>
</dbReference>
<dbReference type="Pfam" id="PF03144">
    <property type="entry name" value="GTP_EFTU_D2"/>
    <property type="match status" value="1"/>
</dbReference>
<dbReference type="PRINTS" id="PR00315">
    <property type="entry name" value="ELONGATNFCT"/>
</dbReference>
<dbReference type="SMART" id="SM00838">
    <property type="entry name" value="EFG_C"/>
    <property type="match status" value="1"/>
</dbReference>
<dbReference type="SMART" id="SM00889">
    <property type="entry name" value="EFG_IV"/>
    <property type="match status" value="1"/>
</dbReference>
<dbReference type="SUPFAM" id="SSF54980">
    <property type="entry name" value="EF-G C-terminal domain-like"/>
    <property type="match status" value="2"/>
</dbReference>
<dbReference type="SUPFAM" id="SSF52540">
    <property type="entry name" value="P-loop containing nucleoside triphosphate hydrolases"/>
    <property type="match status" value="1"/>
</dbReference>
<dbReference type="SUPFAM" id="SSF54211">
    <property type="entry name" value="Ribosomal protein S5 domain 2-like"/>
    <property type="match status" value="1"/>
</dbReference>
<dbReference type="SUPFAM" id="SSF50447">
    <property type="entry name" value="Translation proteins"/>
    <property type="match status" value="1"/>
</dbReference>
<dbReference type="PROSITE" id="PS00301">
    <property type="entry name" value="G_TR_1"/>
    <property type="match status" value="1"/>
</dbReference>
<dbReference type="PROSITE" id="PS51722">
    <property type="entry name" value="G_TR_2"/>
    <property type="match status" value="1"/>
</dbReference>
<gene>
    <name evidence="1" type="primary">fusA</name>
    <name type="ordered locus">BT9727_0103</name>
</gene>
<protein>
    <recommendedName>
        <fullName evidence="1">Elongation factor G</fullName>
        <shortName evidence="1">EF-G</shortName>
    </recommendedName>
</protein>
<proteinExistence type="inferred from homology"/>
<reference key="1">
    <citation type="journal article" date="2006" name="J. Bacteriol.">
        <title>Pathogenomic sequence analysis of Bacillus cereus and Bacillus thuringiensis isolates closely related to Bacillus anthracis.</title>
        <authorList>
            <person name="Han C.S."/>
            <person name="Xie G."/>
            <person name="Challacombe J.F."/>
            <person name="Altherr M.R."/>
            <person name="Bhotika S.S."/>
            <person name="Bruce D."/>
            <person name="Campbell C.S."/>
            <person name="Campbell M.L."/>
            <person name="Chen J."/>
            <person name="Chertkov O."/>
            <person name="Cleland C."/>
            <person name="Dimitrijevic M."/>
            <person name="Doggett N.A."/>
            <person name="Fawcett J.J."/>
            <person name="Glavina T."/>
            <person name="Goodwin L.A."/>
            <person name="Hill K.K."/>
            <person name="Hitchcock P."/>
            <person name="Jackson P.J."/>
            <person name="Keim P."/>
            <person name="Kewalramani A.R."/>
            <person name="Longmire J."/>
            <person name="Lucas S."/>
            <person name="Malfatti S."/>
            <person name="McMurry K."/>
            <person name="Meincke L.J."/>
            <person name="Misra M."/>
            <person name="Moseman B.L."/>
            <person name="Mundt M."/>
            <person name="Munk A.C."/>
            <person name="Okinaka R.T."/>
            <person name="Parson-Quintana B."/>
            <person name="Reilly L.P."/>
            <person name="Richardson P."/>
            <person name="Robinson D.L."/>
            <person name="Rubin E."/>
            <person name="Saunders E."/>
            <person name="Tapia R."/>
            <person name="Tesmer J.G."/>
            <person name="Thayer N."/>
            <person name="Thompson L.S."/>
            <person name="Tice H."/>
            <person name="Ticknor L.O."/>
            <person name="Wills P.L."/>
            <person name="Brettin T.S."/>
            <person name="Gilna P."/>
        </authorList>
    </citation>
    <scope>NUCLEOTIDE SEQUENCE [LARGE SCALE GENOMIC DNA]</scope>
    <source>
        <strain>97-27</strain>
    </source>
</reference>
<accession>Q6HPR1</accession>
<sequence>MAREFSLENTRNIGIMAHIDAGKTTATERILYYTGRIHKIGETHEGASQMDWMEQEQERGITITSAATTAQWKGHRVNIIDTPGHVDFTVEVERSLRVLDGAVAVLDAQSGVEPQTETVWRQATTYGVPRIVFVNKMDKIGADFLYSVGTIHDRLQANAHPIQLPIGAEDEFNGIIDLVEECAYMYGNDLGTDIQRVEIPEEHKELAEEYRGKLIEAVAELDEEMMMKYLEGEEITVEELKAGIRKATTSVEFFPVICGSAFKNKGVQILLDAVIDYLPSPLDVPAIKGIVPDTDEEVERKSSDEEPFAALAFKIMTDPYVGKLTFFRVYSGVLNSGSYVKNSTKGKRERVGRILQMHANSREEISTVYAGDIAAAVGLKDTTTGDTLCDEKSLVILESMEFPEPVISVAIEPKSKADQDKMGTALSKLSEEDPTFRAHTDQETGQTIIAGMGELHLDIIVDRMRREFKVEANVGAPQVAYRETFRAAAKVEGKFARQSGGRGQFGHVWIEFEPNEEGKGFEFENKIVGGVVPREYIPAVGAGLEDALKNGVLAGYPVVDIKAALVDGSYHDVDSSEMAFKIAASMALKAAVSKCNPVILEPMMKVEVVIPEEYMGDIMGDVTSRRGRVEGMEARGNAQVVRAMVPLSEMFGYATSLRSNTQGRGTFSMVFDHYEEVPKSVSEEIIKKNKGE</sequence>
<feature type="chain" id="PRO_0000091067" description="Elongation factor G">
    <location>
        <begin position="1"/>
        <end position="692"/>
    </location>
</feature>
<feature type="domain" description="tr-type G">
    <location>
        <begin position="8"/>
        <end position="282"/>
    </location>
</feature>
<feature type="binding site" evidence="1">
    <location>
        <begin position="17"/>
        <end position="24"/>
    </location>
    <ligand>
        <name>GTP</name>
        <dbReference type="ChEBI" id="CHEBI:37565"/>
    </ligand>
</feature>
<feature type="binding site" evidence="1">
    <location>
        <begin position="81"/>
        <end position="85"/>
    </location>
    <ligand>
        <name>GTP</name>
        <dbReference type="ChEBI" id="CHEBI:37565"/>
    </ligand>
</feature>
<feature type="binding site" evidence="1">
    <location>
        <begin position="135"/>
        <end position="138"/>
    </location>
    <ligand>
        <name>GTP</name>
        <dbReference type="ChEBI" id="CHEBI:37565"/>
    </ligand>
</feature>
<keyword id="KW-0963">Cytoplasm</keyword>
<keyword id="KW-0251">Elongation factor</keyword>
<keyword id="KW-0342">GTP-binding</keyword>
<keyword id="KW-0547">Nucleotide-binding</keyword>
<keyword id="KW-0648">Protein biosynthesis</keyword>
<organism>
    <name type="scientific">Bacillus thuringiensis subsp. konkukian (strain 97-27)</name>
    <dbReference type="NCBI Taxonomy" id="281309"/>
    <lineage>
        <taxon>Bacteria</taxon>
        <taxon>Bacillati</taxon>
        <taxon>Bacillota</taxon>
        <taxon>Bacilli</taxon>
        <taxon>Bacillales</taxon>
        <taxon>Bacillaceae</taxon>
        <taxon>Bacillus</taxon>
        <taxon>Bacillus cereus group</taxon>
    </lineage>
</organism>